<evidence type="ECO:0000255" key="1">
    <source>
        <dbReference type="HAMAP-Rule" id="MF_00340"/>
    </source>
</evidence>
<evidence type="ECO:0000256" key="2">
    <source>
        <dbReference type="SAM" id="MobiDB-lite"/>
    </source>
</evidence>
<evidence type="ECO:0000305" key="3"/>
<keyword id="KW-0687">Ribonucleoprotein</keyword>
<keyword id="KW-0689">Ribosomal protein</keyword>
<protein>
    <recommendedName>
        <fullName evidence="1">Large ribosomal subunit protein bL32</fullName>
    </recommendedName>
    <alternativeName>
        <fullName evidence="3">50S ribosomal protein L32</fullName>
    </alternativeName>
</protein>
<reference key="1">
    <citation type="journal article" date="2007" name="PLoS Genet.">
        <title>The complete genome sequence of Yersinia pseudotuberculosis IP31758, the causative agent of Far East scarlet-like fever.</title>
        <authorList>
            <person name="Eppinger M."/>
            <person name="Rosovitz M.J."/>
            <person name="Fricke W.F."/>
            <person name="Rasko D.A."/>
            <person name="Kokorina G."/>
            <person name="Fayolle C."/>
            <person name="Lindler L.E."/>
            <person name="Carniel E."/>
            <person name="Ravel J."/>
        </authorList>
    </citation>
    <scope>NUCLEOTIDE SEQUENCE [LARGE SCALE GENOMIC DNA]</scope>
    <source>
        <strain>IP 31758</strain>
    </source>
</reference>
<gene>
    <name evidence="1" type="primary">rpmF</name>
    <name type="ordered locus">YpsIP31758_1574</name>
</gene>
<organism>
    <name type="scientific">Yersinia pseudotuberculosis serotype O:1b (strain IP 31758)</name>
    <dbReference type="NCBI Taxonomy" id="349747"/>
    <lineage>
        <taxon>Bacteria</taxon>
        <taxon>Pseudomonadati</taxon>
        <taxon>Pseudomonadota</taxon>
        <taxon>Gammaproteobacteria</taxon>
        <taxon>Enterobacterales</taxon>
        <taxon>Yersiniaceae</taxon>
        <taxon>Yersinia</taxon>
    </lineage>
</organism>
<dbReference type="EMBL" id="CP000720">
    <property type="protein sequence ID" value="ABS49387.1"/>
    <property type="molecule type" value="Genomic_DNA"/>
</dbReference>
<dbReference type="RefSeq" id="WP_002210931.1">
    <property type="nucleotide sequence ID" value="NC_009708.1"/>
</dbReference>
<dbReference type="SMR" id="A7FH23"/>
<dbReference type="GeneID" id="97455787"/>
<dbReference type="KEGG" id="ypi:YpsIP31758_1574"/>
<dbReference type="HOGENOM" id="CLU_129084_2_1_6"/>
<dbReference type="Proteomes" id="UP000002412">
    <property type="component" value="Chromosome"/>
</dbReference>
<dbReference type="GO" id="GO:0015934">
    <property type="term" value="C:large ribosomal subunit"/>
    <property type="evidence" value="ECO:0007669"/>
    <property type="project" value="InterPro"/>
</dbReference>
<dbReference type="GO" id="GO:0003735">
    <property type="term" value="F:structural constituent of ribosome"/>
    <property type="evidence" value="ECO:0007669"/>
    <property type="project" value="InterPro"/>
</dbReference>
<dbReference type="GO" id="GO:0006412">
    <property type="term" value="P:translation"/>
    <property type="evidence" value="ECO:0007669"/>
    <property type="project" value="UniProtKB-UniRule"/>
</dbReference>
<dbReference type="HAMAP" id="MF_00340">
    <property type="entry name" value="Ribosomal_bL32"/>
    <property type="match status" value="1"/>
</dbReference>
<dbReference type="InterPro" id="IPR002677">
    <property type="entry name" value="Ribosomal_bL32"/>
</dbReference>
<dbReference type="InterPro" id="IPR044957">
    <property type="entry name" value="Ribosomal_bL32_bact"/>
</dbReference>
<dbReference type="InterPro" id="IPR011332">
    <property type="entry name" value="Ribosomal_zn-bd"/>
</dbReference>
<dbReference type="NCBIfam" id="TIGR01031">
    <property type="entry name" value="rpmF_bact"/>
    <property type="match status" value="1"/>
</dbReference>
<dbReference type="PANTHER" id="PTHR35534">
    <property type="entry name" value="50S RIBOSOMAL PROTEIN L32"/>
    <property type="match status" value="1"/>
</dbReference>
<dbReference type="PANTHER" id="PTHR35534:SF1">
    <property type="entry name" value="LARGE RIBOSOMAL SUBUNIT PROTEIN BL32"/>
    <property type="match status" value="1"/>
</dbReference>
<dbReference type="Pfam" id="PF01783">
    <property type="entry name" value="Ribosomal_L32p"/>
    <property type="match status" value="1"/>
</dbReference>
<dbReference type="SUPFAM" id="SSF57829">
    <property type="entry name" value="Zn-binding ribosomal proteins"/>
    <property type="match status" value="1"/>
</dbReference>
<accession>A7FH23</accession>
<name>RL32_YERP3</name>
<sequence>MAVQQNKPTRSKRGMRRSHDALTTATLSVDKTSGETHLRHHITADGFYRGRKVIG</sequence>
<feature type="chain" id="PRO_1000059825" description="Large ribosomal subunit protein bL32">
    <location>
        <begin position="1"/>
        <end position="55"/>
    </location>
</feature>
<feature type="region of interest" description="Disordered" evidence="2">
    <location>
        <begin position="1"/>
        <end position="27"/>
    </location>
</feature>
<comment type="similarity">
    <text evidence="1">Belongs to the bacterial ribosomal protein bL32 family.</text>
</comment>
<proteinExistence type="inferred from homology"/>